<protein>
    <recommendedName>
        <fullName evidence="1">tRNA pseudouridine synthase D</fullName>
        <ecNumber evidence="1">5.4.99.27</ecNumber>
    </recommendedName>
    <alternativeName>
        <fullName evidence="1">tRNA pseudouridine(13) synthase</fullName>
    </alternativeName>
    <alternativeName>
        <fullName evidence="1">tRNA pseudouridylate synthase D</fullName>
    </alternativeName>
    <alternativeName>
        <fullName evidence="1">tRNA-uridine isomerase D</fullName>
    </alternativeName>
</protein>
<evidence type="ECO:0000255" key="1">
    <source>
        <dbReference type="HAMAP-Rule" id="MF_01082"/>
    </source>
</evidence>
<proteinExistence type="inferred from homology"/>
<sequence>MSDILSSLAYLTGKPVASAKIKAQPEHFQVREDLGFAFTGEGEHLMVRIRKTGENTSFVANELAKACGVKSKDVSWAGLKDRHAVTEQWLSVHLPKGETPDFSTFLAQYPSIEILATDRHNKKLRPGDLIGNEFVVTLSEVTDMADVEQRLEKVKQVGVPNYFGSQRFGNDGNNLDEARRWGRENVRTRNQNKRSMYLSAARSWIFNRIVSARLENGVFDKFIDGDIAQTSQGLLAVDASNLADMQNKLALSEVEITAALAGDNALPTQADALALEQPFIDEEPDLMALIRGNRMRHDRREIALKPKDLAWNVEGNNITLTFSLDAGSFATSIVRELVNEVKVEREY</sequence>
<organism>
    <name type="scientific">Vibrio parahaemolyticus serotype O3:K6 (strain RIMD 2210633)</name>
    <dbReference type="NCBI Taxonomy" id="223926"/>
    <lineage>
        <taxon>Bacteria</taxon>
        <taxon>Pseudomonadati</taxon>
        <taxon>Pseudomonadota</taxon>
        <taxon>Gammaproteobacteria</taxon>
        <taxon>Vibrionales</taxon>
        <taxon>Vibrionaceae</taxon>
        <taxon>Vibrio</taxon>
    </lineage>
</organism>
<accession>Q87LQ4</accession>
<comment type="function">
    <text evidence="1">Responsible for synthesis of pseudouridine from uracil-13 in transfer RNAs.</text>
</comment>
<comment type="catalytic activity">
    <reaction evidence="1">
        <text>uridine(13) in tRNA = pseudouridine(13) in tRNA</text>
        <dbReference type="Rhea" id="RHEA:42540"/>
        <dbReference type="Rhea" id="RHEA-COMP:10105"/>
        <dbReference type="Rhea" id="RHEA-COMP:10106"/>
        <dbReference type="ChEBI" id="CHEBI:65314"/>
        <dbReference type="ChEBI" id="CHEBI:65315"/>
        <dbReference type="EC" id="5.4.99.27"/>
    </reaction>
</comment>
<comment type="similarity">
    <text evidence="1">Belongs to the pseudouridine synthase TruD family.</text>
</comment>
<name>TRUD_VIBPA</name>
<reference key="1">
    <citation type="journal article" date="2003" name="Lancet">
        <title>Genome sequence of Vibrio parahaemolyticus: a pathogenic mechanism distinct from that of V. cholerae.</title>
        <authorList>
            <person name="Makino K."/>
            <person name="Oshima K."/>
            <person name="Kurokawa K."/>
            <person name="Yokoyama K."/>
            <person name="Uda T."/>
            <person name="Tagomori K."/>
            <person name="Iijima Y."/>
            <person name="Najima M."/>
            <person name="Nakano M."/>
            <person name="Yamashita A."/>
            <person name="Kubota Y."/>
            <person name="Kimura S."/>
            <person name="Yasunaga T."/>
            <person name="Honda T."/>
            <person name="Shinagawa H."/>
            <person name="Hattori M."/>
            <person name="Iida T."/>
        </authorList>
    </citation>
    <scope>NUCLEOTIDE SEQUENCE [LARGE SCALE GENOMIC DNA]</scope>
    <source>
        <strain>RIMD 2210633</strain>
    </source>
</reference>
<feature type="chain" id="PRO_0000152527" description="tRNA pseudouridine synthase D">
    <location>
        <begin position="1"/>
        <end position="347"/>
    </location>
</feature>
<feature type="domain" description="TRUD" evidence="1">
    <location>
        <begin position="158"/>
        <end position="305"/>
    </location>
</feature>
<feature type="active site" description="Nucleophile" evidence="1">
    <location>
        <position position="81"/>
    </location>
</feature>
<gene>
    <name evidence="1" type="primary">truD</name>
    <name type="ordered locus">VP2557</name>
</gene>
<dbReference type="EC" id="5.4.99.27" evidence="1"/>
<dbReference type="EMBL" id="BA000031">
    <property type="protein sequence ID" value="BAC60820.1"/>
    <property type="molecule type" value="Genomic_DNA"/>
</dbReference>
<dbReference type="RefSeq" id="NP_798936.1">
    <property type="nucleotide sequence ID" value="NC_004603.1"/>
</dbReference>
<dbReference type="RefSeq" id="WP_005478539.1">
    <property type="nucleotide sequence ID" value="NC_004603.1"/>
</dbReference>
<dbReference type="SMR" id="Q87LQ4"/>
<dbReference type="GeneID" id="1190081"/>
<dbReference type="KEGG" id="vpa:VP2557"/>
<dbReference type="PATRIC" id="fig|223926.6.peg.2455"/>
<dbReference type="eggNOG" id="COG0585">
    <property type="taxonomic scope" value="Bacteria"/>
</dbReference>
<dbReference type="HOGENOM" id="CLU_005281_4_0_6"/>
<dbReference type="Proteomes" id="UP000002493">
    <property type="component" value="Chromosome 1"/>
</dbReference>
<dbReference type="GO" id="GO:0005829">
    <property type="term" value="C:cytosol"/>
    <property type="evidence" value="ECO:0007669"/>
    <property type="project" value="TreeGrafter"/>
</dbReference>
<dbReference type="GO" id="GO:0003723">
    <property type="term" value="F:RNA binding"/>
    <property type="evidence" value="ECO:0007669"/>
    <property type="project" value="InterPro"/>
</dbReference>
<dbReference type="GO" id="GO:0160150">
    <property type="term" value="F:tRNA pseudouridine(13) synthase activity"/>
    <property type="evidence" value="ECO:0007669"/>
    <property type="project" value="UniProtKB-EC"/>
</dbReference>
<dbReference type="GO" id="GO:0031119">
    <property type="term" value="P:tRNA pseudouridine synthesis"/>
    <property type="evidence" value="ECO:0007669"/>
    <property type="project" value="UniProtKB-UniRule"/>
</dbReference>
<dbReference type="CDD" id="cd02575">
    <property type="entry name" value="PseudoU_synth_EcTruD"/>
    <property type="match status" value="1"/>
</dbReference>
<dbReference type="Gene3D" id="3.30.2350.20">
    <property type="entry name" value="TruD, catalytic domain"/>
    <property type="match status" value="1"/>
</dbReference>
<dbReference type="Gene3D" id="3.30.2340.10">
    <property type="entry name" value="TruD, insertion domain"/>
    <property type="match status" value="1"/>
</dbReference>
<dbReference type="HAMAP" id="MF_01082">
    <property type="entry name" value="TruD"/>
    <property type="match status" value="1"/>
</dbReference>
<dbReference type="InterPro" id="IPR020103">
    <property type="entry name" value="PsdUridine_synth_cat_dom_sf"/>
</dbReference>
<dbReference type="InterPro" id="IPR001656">
    <property type="entry name" value="PsdUridine_synth_TruD"/>
</dbReference>
<dbReference type="InterPro" id="IPR020119">
    <property type="entry name" value="PsdUridine_synth_TruD_CS"/>
</dbReference>
<dbReference type="InterPro" id="IPR011760">
    <property type="entry name" value="PsdUridine_synth_TruD_insert"/>
</dbReference>
<dbReference type="InterPro" id="IPR042214">
    <property type="entry name" value="TruD_catalytic"/>
</dbReference>
<dbReference type="InterPro" id="IPR043165">
    <property type="entry name" value="TruD_insert_sf"/>
</dbReference>
<dbReference type="InterPro" id="IPR050170">
    <property type="entry name" value="TruD_pseudoU_synthase"/>
</dbReference>
<dbReference type="NCBIfam" id="NF002155">
    <property type="entry name" value="PRK00984.1-4"/>
    <property type="match status" value="1"/>
</dbReference>
<dbReference type="NCBIfam" id="TIGR00094">
    <property type="entry name" value="tRNA_TruD_broad"/>
    <property type="match status" value="1"/>
</dbReference>
<dbReference type="PANTHER" id="PTHR47811">
    <property type="entry name" value="TRNA PSEUDOURIDINE SYNTHASE D"/>
    <property type="match status" value="1"/>
</dbReference>
<dbReference type="PANTHER" id="PTHR47811:SF1">
    <property type="entry name" value="TRNA PSEUDOURIDINE SYNTHASE D"/>
    <property type="match status" value="1"/>
</dbReference>
<dbReference type="Pfam" id="PF01142">
    <property type="entry name" value="TruD"/>
    <property type="match status" value="2"/>
</dbReference>
<dbReference type="SUPFAM" id="SSF55120">
    <property type="entry name" value="Pseudouridine synthase"/>
    <property type="match status" value="1"/>
</dbReference>
<dbReference type="PROSITE" id="PS50984">
    <property type="entry name" value="TRUD"/>
    <property type="match status" value="1"/>
</dbReference>
<dbReference type="PROSITE" id="PS01268">
    <property type="entry name" value="UPF0024"/>
    <property type="match status" value="1"/>
</dbReference>
<keyword id="KW-0413">Isomerase</keyword>
<keyword id="KW-0819">tRNA processing</keyword>